<name>RS14_STRR6</name>
<protein>
    <recommendedName>
        <fullName evidence="1">Small ribosomal subunit protein uS14</fullName>
    </recommendedName>
    <alternativeName>
        <fullName evidence="2">30S ribosomal protein S14</fullName>
    </alternativeName>
</protein>
<comment type="function">
    <text evidence="1">Binds 16S rRNA, required for the assembly of 30S particles and may also be responsible for determining the conformation of the 16S rRNA at the A site.</text>
</comment>
<comment type="subunit">
    <text evidence="1">Part of the 30S ribosomal subunit. Contacts proteins S3 and S10.</text>
</comment>
<comment type="similarity">
    <text evidence="1">Belongs to the universal ribosomal protein uS14 family.</text>
</comment>
<sequence length="89" mass="10076">MAKKSMVAREAKRQKIVDRYAEKRAALKAAGDYEGLSKLPRNASPTRLHNRCRVTGRPHSVYRKFGLSRIAFRELAHKGQIPGVTKASW</sequence>
<accession>P66420</accession>
<accession>Q97SV0</accession>
<proteinExistence type="inferred from homology"/>
<keyword id="KW-1185">Reference proteome</keyword>
<keyword id="KW-0687">Ribonucleoprotein</keyword>
<keyword id="KW-0689">Ribosomal protein</keyword>
<keyword id="KW-0694">RNA-binding</keyword>
<keyword id="KW-0699">rRNA-binding</keyword>
<feature type="chain" id="PRO_0000130942" description="Small ribosomal subunit protein uS14">
    <location>
        <begin position="1"/>
        <end position="89"/>
    </location>
</feature>
<organism>
    <name type="scientific">Streptococcus pneumoniae (strain ATCC BAA-255 / R6)</name>
    <dbReference type="NCBI Taxonomy" id="171101"/>
    <lineage>
        <taxon>Bacteria</taxon>
        <taxon>Bacillati</taxon>
        <taxon>Bacillota</taxon>
        <taxon>Bacilli</taxon>
        <taxon>Lactobacillales</taxon>
        <taxon>Streptococcaceae</taxon>
        <taxon>Streptococcus</taxon>
    </lineage>
</organism>
<gene>
    <name evidence="1" type="primary">rpsN</name>
    <name type="ordered locus">spr0202</name>
</gene>
<reference key="1">
    <citation type="journal article" date="2001" name="J. Bacteriol.">
        <title>Genome of the bacterium Streptococcus pneumoniae strain R6.</title>
        <authorList>
            <person name="Hoskins J."/>
            <person name="Alborn W.E. Jr."/>
            <person name="Arnold J."/>
            <person name="Blaszczak L.C."/>
            <person name="Burgett S."/>
            <person name="DeHoff B.S."/>
            <person name="Estrem S.T."/>
            <person name="Fritz L."/>
            <person name="Fu D.-J."/>
            <person name="Fuller W."/>
            <person name="Geringer C."/>
            <person name="Gilmour R."/>
            <person name="Glass J.S."/>
            <person name="Khoja H."/>
            <person name="Kraft A.R."/>
            <person name="Lagace R.E."/>
            <person name="LeBlanc D.J."/>
            <person name="Lee L.N."/>
            <person name="Lefkowitz E.J."/>
            <person name="Lu J."/>
            <person name="Matsushima P."/>
            <person name="McAhren S.M."/>
            <person name="McHenney M."/>
            <person name="McLeaster K."/>
            <person name="Mundy C.W."/>
            <person name="Nicas T.I."/>
            <person name="Norris F.H."/>
            <person name="O'Gara M."/>
            <person name="Peery R.B."/>
            <person name="Robertson G.T."/>
            <person name="Rockey P."/>
            <person name="Sun P.-M."/>
            <person name="Winkler M.E."/>
            <person name="Yang Y."/>
            <person name="Young-Bellido M."/>
            <person name="Zhao G."/>
            <person name="Zook C.A."/>
            <person name="Baltz R.H."/>
            <person name="Jaskunas S.R."/>
            <person name="Rosteck P.R. Jr."/>
            <person name="Skatrud P.L."/>
            <person name="Glass J.I."/>
        </authorList>
    </citation>
    <scope>NUCLEOTIDE SEQUENCE [LARGE SCALE GENOMIC DNA]</scope>
    <source>
        <strain>ATCC BAA-255 / R6</strain>
    </source>
</reference>
<evidence type="ECO:0000255" key="1">
    <source>
        <dbReference type="HAMAP-Rule" id="MF_00537"/>
    </source>
</evidence>
<evidence type="ECO:0000305" key="2"/>
<dbReference type="EMBL" id="AE007317">
    <property type="protein sequence ID" value="AAK99006.1"/>
    <property type="molecule type" value="Genomic_DNA"/>
</dbReference>
<dbReference type="PIR" id="B97897">
    <property type="entry name" value="B97897"/>
</dbReference>
<dbReference type="RefSeq" id="NP_357796.1">
    <property type="nucleotide sequence ID" value="NC_003098.1"/>
</dbReference>
<dbReference type="RefSeq" id="WP_001085703.1">
    <property type="nucleotide sequence ID" value="NC_003098.1"/>
</dbReference>
<dbReference type="SMR" id="P66420"/>
<dbReference type="STRING" id="171101.spr0202"/>
<dbReference type="GeneID" id="45652296"/>
<dbReference type="KEGG" id="spr:spr0202"/>
<dbReference type="PATRIC" id="fig|171101.6.peg.233"/>
<dbReference type="eggNOG" id="COG0199">
    <property type="taxonomic scope" value="Bacteria"/>
</dbReference>
<dbReference type="HOGENOM" id="CLU_139869_0_0_9"/>
<dbReference type="PRO" id="PR:P66420"/>
<dbReference type="Proteomes" id="UP000000586">
    <property type="component" value="Chromosome"/>
</dbReference>
<dbReference type="GO" id="GO:0005737">
    <property type="term" value="C:cytoplasm"/>
    <property type="evidence" value="ECO:0007669"/>
    <property type="project" value="UniProtKB-ARBA"/>
</dbReference>
<dbReference type="GO" id="GO:0015935">
    <property type="term" value="C:small ribosomal subunit"/>
    <property type="evidence" value="ECO:0000318"/>
    <property type="project" value="GO_Central"/>
</dbReference>
<dbReference type="GO" id="GO:0019843">
    <property type="term" value="F:rRNA binding"/>
    <property type="evidence" value="ECO:0007669"/>
    <property type="project" value="UniProtKB-UniRule"/>
</dbReference>
<dbReference type="GO" id="GO:0003735">
    <property type="term" value="F:structural constituent of ribosome"/>
    <property type="evidence" value="ECO:0000318"/>
    <property type="project" value="GO_Central"/>
</dbReference>
<dbReference type="GO" id="GO:0006412">
    <property type="term" value="P:translation"/>
    <property type="evidence" value="ECO:0000318"/>
    <property type="project" value="GO_Central"/>
</dbReference>
<dbReference type="FunFam" id="4.10.830.10:FF:000003">
    <property type="entry name" value="30S ribosomal protein S14"/>
    <property type="match status" value="1"/>
</dbReference>
<dbReference type="Gene3D" id="4.10.830.10">
    <property type="entry name" value="30s Ribosomal Protein S14, Chain N"/>
    <property type="match status" value="1"/>
</dbReference>
<dbReference type="HAMAP" id="MF_00537">
    <property type="entry name" value="Ribosomal_uS14_1"/>
    <property type="match status" value="1"/>
</dbReference>
<dbReference type="InterPro" id="IPR001209">
    <property type="entry name" value="Ribosomal_uS14"/>
</dbReference>
<dbReference type="InterPro" id="IPR023036">
    <property type="entry name" value="Ribosomal_uS14_bac/plastid"/>
</dbReference>
<dbReference type="InterPro" id="IPR018271">
    <property type="entry name" value="Ribosomal_uS14_CS"/>
</dbReference>
<dbReference type="InterPro" id="IPR043140">
    <property type="entry name" value="Ribosomal_uS14_sf"/>
</dbReference>
<dbReference type="NCBIfam" id="NF006477">
    <property type="entry name" value="PRK08881.1"/>
    <property type="match status" value="1"/>
</dbReference>
<dbReference type="PANTHER" id="PTHR19836">
    <property type="entry name" value="30S RIBOSOMAL PROTEIN S14"/>
    <property type="match status" value="1"/>
</dbReference>
<dbReference type="PANTHER" id="PTHR19836:SF19">
    <property type="entry name" value="SMALL RIBOSOMAL SUBUNIT PROTEIN US14M"/>
    <property type="match status" value="1"/>
</dbReference>
<dbReference type="Pfam" id="PF00253">
    <property type="entry name" value="Ribosomal_S14"/>
    <property type="match status" value="1"/>
</dbReference>
<dbReference type="SUPFAM" id="SSF57716">
    <property type="entry name" value="Glucocorticoid receptor-like (DNA-binding domain)"/>
    <property type="match status" value="1"/>
</dbReference>
<dbReference type="PROSITE" id="PS00527">
    <property type="entry name" value="RIBOSOMAL_S14"/>
    <property type="match status" value="1"/>
</dbReference>